<sequence>MKNNSVKIVVATGIGAALFVIIGWLINIPTPIPNTSIQLQYAVLALFSALFGPLAGFLIGFIGHALKDSFLYGAPWWTWVLGSGLIGLFLAFGVKRETLTQGIFGNKEIIRFNIVQFLANVVVWGIIAPIGDVLVYSEPANKVFTQGIVAGLVNALTIAVAGTLLLKLYAATRTKSGSLDKE</sequence>
<proteinExistence type="inferred from homology"/>
<name>YDCD_LACLA</name>
<feature type="chain" id="PRO_0000260796" description="UPF0397 protein YdcD">
    <location>
        <begin position="1"/>
        <end position="182"/>
    </location>
</feature>
<feature type="transmembrane region" description="Helical" evidence="1">
    <location>
        <begin position="8"/>
        <end position="28"/>
    </location>
</feature>
<feature type="transmembrane region" description="Helical" evidence="1">
    <location>
        <begin position="42"/>
        <end position="62"/>
    </location>
</feature>
<feature type="transmembrane region" description="Helical" evidence="1">
    <location>
        <begin position="74"/>
        <end position="94"/>
    </location>
</feature>
<feature type="transmembrane region" description="Helical" evidence="1">
    <location>
        <begin position="114"/>
        <end position="134"/>
    </location>
</feature>
<feature type="transmembrane region" description="Helical" evidence="1">
    <location>
        <begin position="146"/>
        <end position="166"/>
    </location>
</feature>
<organism>
    <name type="scientific">Lactococcus lactis subsp. lactis (strain IL1403)</name>
    <name type="common">Streptococcus lactis</name>
    <dbReference type="NCBI Taxonomy" id="272623"/>
    <lineage>
        <taxon>Bacteria</taxon>
        <taxon>Bacillati</taxon>
        <taxon>Bacillota</taxon>
        <taxon>Bacilli</taxon>
        <taxon>Lactobacillales</taxon>
        <taxon>Streptococcaceae</taxon>
        <taxon>Lactococcus</taxon>
    </lineage>
</organism>
<gene>
    <name type="primary">ydcD</name>
    <name type="ordered locus">LL0324</name>
    <name type="ORF">L123147</name>
</gene>
<evidence type="ECO:0000255" key="1">
    <source>
        <dbReference type="HAMAP-Rule" id="MF_01572"/>
    </source>
</evidence>
<protein>
    <recommendedName>
        <fullName evidence="1">UPF0397 protein YdcD</fullName>
    </recommendedName>
</protein>
<accession>Q9CIN2</accession>
<comment type="subcellular location">
    <subcellularLocation>
        <location evidence="1">Cell membrane</location>
        <topology evidence="1">Multi-pass membrane protein</topology>
    </subcellularLocation>
</comment>
<comment type="similarity">
    <text evidence="1">Belongs to the UPF0397 family.</text>
</comment>
<reference key="1">
    <citation type="journal article" date="2001" name="Genome Res.">
        <title>The complete genome sequence of the lactic acid bacterium Lactococcus lactis ssp. lactis IL1403.</title>
        <authorList>
            <person name="Bolotin A."/>
            <person name="Wincker P."/>
            <person name="Mauger S."/>
            <person name="Jaillon O."/>
            <person name="Malarme K."/>
            <person name="Weissenbach J."/>
            <person name="Ehrlich S.D."/>
            <person name="Sorokin A."/>
        </authorList>
    </citation>
    <scope>NUCLEOTIDE SEQUENCE [LARGE SCALE GENOMIC DNA]</scope>
    <source>
        <strain>IL1403</strain>
    </source>
</reference>
<keyword id="KW-1003">Cell membrane</keyword>
<keyword id="KW-0472">Membrane</keyword>
<keyword id="KW-1185">Reference proteome</keyword>
<keyword id="KW-0812">Transmembrane</keyword>
<keyword id="KW-1133">Transmembrane helix</keyword>
<dbReference type="EMBL" id="AE005176">
    <property type="protein sequence ID" value="AAK04422.1"/>
    <property type="molecule type" value="Genomic_DNA"/>
</dbReference>
<dbReference type="PIR" id="D86665">
    <property type="entry name" value="D86665"/>
</dbReference>
<dbReference type="RefSeq" id="NP_266480.1">
    <property type="nucleotide sequence ID" value="NC_002662.1"/>
</dbReference>
<dbReference type="RefSeq" id="WP_003131667.1">
    <property type="nucleotide sequence ID" value="NC_002662.1"/>
</dbReference>
<dbReference type="PaxDb" id="272623-L123147"/>
<dbReference type="EnsemblBacteria" id="AAK04422">
    <property type="protein sequence ID" value="AAK04422"/>
    <property type="gene ID" value="L123147"/>
</dbReference>
<dbReference type="KEGG" id="lla:L123147"/>
<dbReference type="PATRIC" id="fig|272623.7.peg.355"/>
<dbReference type="eggNOG" id="COG4720">
    <property type="taxonomic scope" value="Bacteria"/>
</dbReference>
<dbReference type="HOGENOM" id="CLU_120023_0_0_9"/>
<dbReference type="OrthoDB" id="4550662at2"/>
<dbReference type="Proteomes" id="UP000002196">
    <property type="component" value="Chromosome"/>
</dbReference>
<dbReference type="GO" id="GO:0005886">
    <property type="term" value="C:plasma membrane"/>
    <property type="evidence" value="ECO:0007669"/>
    <property type="project" value="UniProtKB-SubCell"/>
</dbReference>
<dbReference type="Gene3D" id="1.10.1760.20">
    <property type="match status" value="1"/>
</dbReference>
<dbReference type="HAMAP" id="MF_01572">
    <property type="entry name" value="UPF0397"/>
    <property type="match status" value="1"/>
</dbReference>
<dbReference type="InterPro" id="IPR009825">
    <property type="entry name" value="ECF_substrate-spec-like"/>
</dbReference>
<dbReference type="InterPro" id="IPR022914">
    <property type="entry name" value="UPF0397"/>
</dbReference>
<dbReference type="NCBIfam" id="NF010182">
    <property type="entry name" value="PRK13661.1"/>
    <property type="match status" value="1"/>
</dbReference>
<dbReference type="PANTHER" id="PTHR37815">
    <property type="entry name" value="UPF0397 PROTEIN BC_2624-RELATED"/>
    <property type="match status" value="1"/>
</dbReference>
<dbReference type="PANTHER" id="PTHR37815:SF3">
    <property type="entry name" value="UPF0397 PROTEIN SPR0429"/>
    <property type="match status" value="1"/>
</dbReference>
<dbReference type="Pfam" id="PF07155">
    <property type="entry name" value="ECF-ribofla_trS"/>
    <property type="match status" value="1"/>
</dbReference>